<proteinExistence type="evidence at transcript level"/>
<evidence type="ECO:0000250" key="1">
    <source>
        <dbReference type="UniProtKB" id="A2RI02"/>
    </source>
</evidence>
<evidence type="ECO:0000255" key="2">
    <source>
        <dbReference type="PROSITE-ProRule" id="PRU00434"/>
    </source>
</evidence>
<evidence type="ECO:0000269" key="3">
    <source>
    </source>
</evidence>
<evidence type="ECO:0000303" key="4">
    <source>
    </source>
</evidence>
<evidence type="ECO:0000305" key="5"/>
<evidence type="ECO:0000305" key="6">
    <source>
    </source>
</evidence>
<comment type="function">
    <text evidence="6">Probable ATP-binding component of the energy-coupling factor (ECF) transporter complex LarMNQO involved in nickel import. LarO is presumably responsible for energy coupling to the transport system.</text>
</comment>
<comment type="subunit">
    <text evidence="5">May form an energy-coupling factor (ECF) transporter complex composed of an ATP-binding protein (A component, LarO), a transmembrane protein (T component, LarQ) and a fused possible substrate-capture protein (S component, LarMN) of unknown stoichiometry.</text>
</comment>
<comment type="subcellular location">
    <subcellularLocation>
        <location evidence="1">Cell membrane</location>
        <topology evidence="1">Peripheral membrane protein</topology>
    </subcellularLocation>
</comment>
<comment type="induction">
    <text evidence="3">Induced by L-lactate but not by a racemic mixture of DL-lactate. Makes part of the larR(MN)QO operon.</text>
</comment>
<comment type="disruption phenotype">
    <text evidence="3">Deletion of both larO and larQ leads to a loss of lactate racemase activity. Addition of Ni(2+) (but not Co(2+)) restores lactate racemase activity in this mutant.</text>
</comment>
<comment type="similarity">
    <text evidence="5">Belongs to the ABC transporter superfamily.</text>
</comment>
<accession>Q890D1</accession>
<accession>F9USS5</accession>
<organism>
    <name type="scientific">Lactiplantibacillus plantarum (strain ATCC BAA-793 / NCIMB 8826 / WCFS1)</name>
    <name type="common">Lactobacillus plantarum</name>
    <dbReference type="NCBI Taxonomy" id="220668"/>
    <lineage>
        <taxon>Bacteria</taxon>
        <taxon>Bacillati</taxon>
        <taxon>Bacillota</taxon>
        <taxon>Bacilli</taxon>
        <taxon>Lactobacillales</taxon>
        <taxon>Lactobacillaceae</taxon>
        <taxon>Lactiplantibacillus</taxon>
    </lineage>
</organism>
<gene>
    <name evidence="4" type="primary">larO</name>
    <name type="ordered locus">lp_0100</name>
</gene>
<feature type="chain" id="PRO_0000092023" description="Nickel import ATP-binding protein LarO">
    <location>
        <begin position="1"/>
        <end position="241"/>
    </location>
</feature>
<feature type="domain" description="ABC transporter" evidence="2">
    <location>
        <begin position="2"/>
        <end position="240"/>
    </location>
</feature>
<feature type="binding site" evidence="2">
    <location>
        <begin position="34"/>
        <end position="41"/>
    </location>
    <ligand>
        <name>ATP</name>
        <dbReference type="ChEBI" id="CHEBI:30616"/>
    </ligand>
</feature>
<dbReference type="EC" id="7.2.2.-" evidence="5"/>
<dbReference type="EMBL" id="AL935263">
    <property type="protein sequence ID" value="CCC77656.1"/>
    <property type="molecule type" value="Genomic_DNA"/>
</dbReference>
<dbReference type="RefSeq" id="YP_004888170.1">
    <property type="nucleotide sequence ID" value="NC_004567.2"/>
</dbReference>
<dbReference type="SMR" id="Q890D1"/>
<dbReference type="STRING" id="220668.lp_0100"/>
<dbReference type="EnsemblBacteria" id="CCC77656">
    <property type="protein sequence ID" value="CCC77656"/>
    <property type="gene ID" value="lp_0100"/>
</dbReference>
<dbReference type="KEGG" id="lpl:lp_0100"/>
<dbReference type="PATRIC" id="fig|220668.9.peg.80"/>
<dbReference type="eggNOG" id="COG1122">
    <property type="taxonomic scope" value="Bacteria"/>
</dbReference>
<dbReference type="HOGENOM" id="CLU_000604_1_22_9"/>
<dbReference type="OrthoDB" id="501320at2"/>
<dbReference type="PhylomeDB" id="Q890D1"/>
<dbReference type="Proteomes" id="UP000000432">
    <property type="component" value="Chromosome"/>
</dbReference>
<dbReference type="GO" id="GO:0043190">
    <property type="term" value="C:ATP-binding cassette (ABC) transporter complex"/>
    <property type="evidence" value="ECO:0007669"/>
    <property type="project" value="TreeGrafter"/>
</dbReference>
<dbReference type="GO" id="GO:0005524">
    <property type="term" value="F:ATP binding"/>
    <property type="evidence" value="ECO:0007669"/>
    <property type="project" value="UniProtKB-KW"/>
</dbReference>
<dbReference type="GO" id="GO:0016887">
    <property type="term" value="F:ATP hydrolysis activity"/>
    <property type="evidence" value="ECO:0007669"/>
    <property type="project" value="InterPro"/>
</dbReference>
<dbReference type="GO" id="GO:0042626">
    <property type="term" value="F:ATPase-coupled transmembrane transporter activity"/>
    <property type="evidence" value="ECO:0007669"/>
    <property type="project" value="TreeGrafter"/>
</dbReference>
<dbReference type="GO" id="GO:0015675">
    <property type="term" value="P:nickel cation transport"/>
    <property type="evidence" value="ECO:0007669"/>
    <property type="project" value="UniProtKB-KW"/>
</dbReference>
<dbReference type="CDD" id="cd03225">
    <property type="entry name" value="ABC_cobalt_CbiO_domain1"/>
    <property type="match status" value="1"/>
</dbReference>
<dbReference type="Gene3D" id="3.40.50.300">
    <property type="entry name" value="P-loop containing nucleotide triphosphate hydrolases"/>
    <property type="match status" value="1"/>
</dbReference>
<dbReference type="InterPro" id="IPR003593">
    <property type="entry name" value="AAA+_ATPase"/>
</dbReference>
<dbReference type="InterPro" id="IPR003439">
    <property type="entry name" value="ABC_transporter-like_ATP-bd"/>
</dbReference>
<dbReference type="InterPro" id="IPR017871">
    <property type="entry name" value="ABC_transporter-like_CS"/>
</dbReference>
<dbReference type="InterPro" id="IPR015856">
    <property type="entry name" value="ABC_transpr_CbiO/EcfA_su"/>
</dbReference>
<dbReference type="InterPro" id="IPR050095">
    <property type="entry name" value="ECF_ABC_transporter_ATP-bd"/>
</dbReference>
<dbReference type="InterPro" id="IPR027417">
    <property type="entry name" value="P-loop_NTPase"/>
</dbReference>
<dbReference type="PANTHER" id="PTHR43553:SF24">
    <property type="entry name" value="ENERGY-COUPLING FACTOR TRANSPORTER ATP-BINDING PROTEIN ECFA1"/>
    <property type="match status" value="1"/>
</dbReference>
<dbReference type="PANTHER" id="PTHR43553">
    <property type="entry name" value="HEAVY METAL TRANSPORTER"/>
    <property type="match status" value="1"/>
</dbReference>
<dbReference type="Pfam" id="PF00005">
    <property type="entry name" value="ABC_tran"/>
    <property type="match status" value="1"/>
</dbReference>
<dbReference type="SMART" id="SM00382">
    <property type="entry name" value="AAA"/>
    <property type="match status" value="1"/>
</dbReference>
<dbReference type="SUPFAM" id="SSF52540">
    <property type="entry name" value="P-loop containing nucleoside triphosphate hydrolases"/>
    <property type="match status" value="1"/>
</dbReference>
<dbReference type="PROSITE" id="PS00211">
    <property type="entry name" value="ABC_TRANSPORTER_1"/>
    <property type="match status" value="1"/>
</dbReference>
<dbReference type="PROSITE" id="PS50893">
    <property type="entry name" value="ABC_TRANSPORTER_2"/>
    <property type="match status" value="1"/>
</dbReference>
<protein>
    <recommendedName>
        <fullName evidence="5">Nickel import ATP-binding protein LarO</fullName>
        <ecNumber evidence="5">7.2.2.-</ecNumber>
    </recommendedName>
    <alternativeName>
        <fullName evidence="5">Energy-coupling factor transporter ATP-binding protein LarO</fullName>
        <shortName evidence="5">ECF transporter A component LarO</shortName>
    </alternativeName>
    <alternativeName>
        <fullName evidence="4">Nickel transport ATP-binding protein</fullName>
    </alternativeName>
</protein>
<keyword id="KW-0067">ATP-binding</keyword>
<keyword id="KW-1003">Cell membrane</keyword>
<keyword id="KW-0406">Ion transport</keyword>
<keyword id="KW-0472">Membrane</keyword>
<keyword id="KW-0533">Nickel</keyword>
<keyword id="KW-0921">Nickel transport</keyword>
<keyword id="KW-0547">Nucleotide-binding</keyword>
<keyword id="KW-1185">Reference proteome</keyword>
<keyword id="KW-1278">Translocase</keyword>
<keyword id="KW-0813">Transport</keyword>
<sequence length="241" mass="26336">MIKLVNICYDYPDTCGLKDLSLTVNSGDFICLMGPNGSGKSTLLRLLSGLASPTSGAYQFHDQPITTTYLADAQNRQQLHQRIGMVFQNTDVQLFNTSVTEEVAFGPRQLGLSAAMVAQRVADCLQLTDCANLADRVPYQLSGGEKKRVALASVLALNPEILLLDEPLNGLTIAAQQQMLTLLQRLQAAGKTIIMASHNYQQVQAVGERFIIFNSTHQVDADLTRADLDQQPARQAQLMTL</sequence>
<reference key="1">
    <citation type="journal article" date="2003" name="Proc. Natl. Acad. Sci. U.S.A.">
        <title>Complete genome sequence of Lactobacillus plantarum WCFS1.</title>
        <authorList>
            <person name="Kleerebezem M."/>
            <person name="Boekhorst J."/>
            <person name="van Kranenburg R."/>
            <person name="Molenaar D."/>
            <person name="Kuipers O.P."/>
            <person name="Leer R."/>
            <person name="Tarchini R."/>
            <person name="Peters S.A."/>
            <person name="Sandbrink H.M."/>
            <person name="Fiers M.W.E.J."/>
            <person name="Stiekema W."/>
            <person name="Klein Lankhorst R.M."/>
            <person name="Bron P.A."/>
            <person name="Hoffer S.M."/>
            <person name="Nierop Groot M.N."/>
            <person name="Kerkhoven R."/>
            <person name="De Vries M."/>
            <person name="Ursing B."/>
            <person name="De Vos W.M."/>
            <person name="Siezen R.J."/>
        </authorList>
    </citation>
    <scope>NUCLEOTIDE SEQUENCE [LARGE SCALE GENOMIC DNA]</scope>
    <source>
        <strain>ATCC BAA-793 / NCIMB 8826 / WCFS1</strain>
    </source>
</reference>
<reference key="2">
    <citation type="journal article" date="2012" name="J. Bacteriol.">
        <title>Complete resequencing and reannotation of the Lactobacillus plantarum WCFS1 genome.</title>
        <authorList>
            <person name="Siezen R.J."/>
            <person name="Francke C."/>
            <person name="Renckens B."/>
            <person name="Boekhorst J."/>
            <person name="Wels M."/>
            <person name="Kleerebezem M."/>
            <person name="van Hijum S.A."/>
        </authorList>
    </citation>
    <scope>NUCLEOTIDE SEQUENCE [LARGE SCALE GENOMIC DNA]</scope>
    <scope>GENOME REANNOTATION</scope>
    <source>
        <strain>ATCC BAA-793 / NCIMB 8826 / WCFS1</strain>
    </source>
</reference>
<reference key="3">
    <citation type="journal article" date="2014" name="Nat. Commun.">
        <title>Lactate racemase is a nickel-dependent enzyme activated by a widespread maturation system.</title>
        <authorList>
            <person name="Desguin B."/>
            <person name="Goffin P."/>
            <person name="Viaene E."/>
            <person name="Kleerebezem M."/>
            <person name="Martin-Diaconescu V."/>
            <person name="Maroney M.J."/>
            <person name="Declercq J.P."/>
            <person name="Soumillion P."/>
            <person name="Hols P."/>
        </authorList>
    </citation>
    <scope>FUNCTION</scope>
    <scope>INDUCTION</scope>
    <scope>DISRUPTION PHENOTYPE</scope>
    <source>
        <strain>ATCC BAA-793 / NCIMB 8826 / WCFS1</strain>
    </source>
</reference>
<name>LARO_LACPL</name>